<accession>Q8PWU0</accession>
<sequence>MLEDEYQLDFFKNNGFVRKQCQKCGTFFWTRDPERNTCGDAPCDPYSFIGSPVFSREFNISEMREYYLSFFEARGHTRINRYPVVARWRDDIYLTIASIADFQPFVTSGQVPPPANPLTISQPCIRLNDLDSVGRSGRHLTNFEMMAHHAFNRRDNEIYWKEHTLELCDELLNSLKVNPLAVTYKEEPWAGGGNAGPCVEVIVHGLELATLVFMDLKTDKKGDIEIKGETYSKMDNYIVDTGYGLERFVWASRGSPTIYDALFPGIVNELMGLAGIEHELNDSEYANILAQNARLAGFMDVSEKANLMELRKKVASSIGMTVDKLSAIMEPVEKVYAITDHTRCLTFMLGDGIIPSNVKAGYLARLVLRRTLRMMKDLDIRIPLSEIVDMHIKNMPEYPGFRENFPVIQDILESEEEKFNTTMERGRRIIQKSASHFKKTGEKIPLSQLTELYDSHGIPPEMAKEVAAEIGVGVEFPDNFYSIIGELHNKAEEKEEEVNPYAERLKHLPKTKRRFYDEPTRLEFEAVVLDVFDNHVVLDNTFFYAEGGGQPADIGTIVAEDTVYRVVDVQVYEGVILHTIENPGKELAITKGELITGKVDEKRRMTLARHHTATHIVNDAARKVLGKHIWQAGAQKFEDHSRLDLSHYKHISPEEIRQIELLANRTVMENKRVVTEWMPRTEAEQVYGFGLYQGGVPPGEKIRIVKVGDDVEACGGTHCTSTGIIGPIKILKTERIQDGVERIEFAAGTAAVRAMQKLESLLVDSSKTLSVPPEHLPVSVDRFFGEWKDLKKENERLKEELARSRVYRMLGDASEVSGLKVITEQVSGADSLELQKIATELLKTENVVALLASDFEGVKIVASAGEKAMKCGVNAGNLVREMSKIVGGGGGGKPALAMGGGTDPTRIQDALTRGLELVKTAACKEA</sequence>
<proteinExistence type="inferred from homology"/>
<keyword id="KW-0030">Aminoacyl-tRNA synthetase</keyword>
<keyword id="KW-0067">ATP-binding</keyword>
<keyword id="KW-0963">Cytoplasm</keyword>
<keyword id="KW-0436">Ligase</keyword>
<keyword id="KW-0479">Metal-binding</keyword>
<keyword id="KW-0547">Nucleotide-binding</keyword>
<keyword id="KW-0648">Protein biosynthesis</keyword>
<keyword id="KW-0694">RNA-binding</keyword>
<keyword id="KW-0820">tRNA-binding</keyword>
<keyword id="KW-0862">Zinc</keyword>
<dbReference type="EC" id="6.1.1.7" evidence="1"/>
<dbReference type="EMBL" id="AE008384">
    <property type="protein sequence ID" value="AAM31182.1"/>
    <property type="molecule type" value="Genomic_DNA"/>
</dbReference>
<dbReference type="RefSeq" id="WP_011033432.1">
    <property type="nucleotide sequence ID" value="NC_003901.1"/>
</dbReference>
<dbReference type="SMR" id="Q8PWU0"/>
<dbReference type="DNASU" id="1479828"/>
<dbReference type="GeneID" id="1479828"/>
<dbReference type="KEGG" id="mma:MM_1486"/>
<dbReference type="PATRIC" id="fig|192952.21.peg.1718"/>
<dbReference type="eggNOG" id="arCOG01255">
    <property type="taxonomic scope" value="Archaea"/>
</dbReference>
<dbReference type="HOGENOM" id="CLU_004485_4_0_2"/>
<dbReference type="Proteomes" id="UP000000595">
    <property type="component" value="Chromosome"/>
</dbReference>
<dbReference type="GO" id="GO:0005737">
    <property type="term" value="C:cytoplasm"/>
    <property type="evidence" value="ECO:0007669"/>
    <property type="project" value="UniProtKB-SubCell"/>
</dbReference>
<dbReference type="GO" id="GO:0004813">
    <property type="term" value="F:alanine-tRNA ligase activity"/>
    <property type="evidence" value="ECO:0007669"/>
    <property type="project" value="UniProtKB-UniRule"/>
</dbReference>
<dbReference type="GO" id="GO:0002161">
    <property type="term" value="F:aminoacyl-tRNA deacylase activity"/>
    <property type="evidence" value="ECO:0007669"/>
    <property type="project" value="TreeGrafter"/>
</dbReference>
<dbReference type="GO" id="GO:0005524">
    <property type="term" value="F:ATP binding"/>
    <property type="evidence" value="ECO:0007669"/>
    <property type="project" value="UniProtKB-UniRule"/>
</dbReference>
<dbReference type="GO" id="GO:0000049">
    <property type="term" value="F:tRNA binding"/>
    <property type="evidence" value="ECO:0007669"/>
    <property type="project" value="UniProtKB-KW"/>
</dbReference>
<dbReference type="GO" id="GO:0008270">
    <property type="term" value="F:zinc ion binding"/>
    <property type="evidence" value="ECO:0007669"/>
    <property type="project" value="UniProtKB-UniRule"/>
</dbReference>
<dbReference type="GO" id="GO:0006419">
    <property type="term" value="P:alanyl-tRNA aminoacylation"/>
    <property type="evidence" value="ECO:0007669"/>
    <property type="project" value="UniProtKB-UniRule"/>
</dbReference>
<dbReference type="CDD" id="cd00673">
    <property type="entry name" value="AlaRS_core"/>
    <property type="match status" value="1"/>
</dbReference>
<dbReference type="FunFam" id="2.40.30.130:FF:000028">
    <property type="entry name" value="Alanine--tRNA ligase"/>
    <property type="match status" value="1"/>
</dbReference>
<dbReference type="FunFam" id="3.10.310.40:FF:000001">
    <property type="entry name" value="Alanine--tRNA ligase"/>
    <property type="match status" value="1"/>
</dbReference>
<dbReference type="FunFam" id="3.30.54.20:FF:000005">
    <property type="entry name" value="Alanine--tRNA ligase"/>
    <property type="match status" value="1"/>
</dbReference>
<dbReference type="FunFam" id="3.30.930.10:FF:000056">
    <property type="entry name" value="Alanine--tRNA ligase"/>
    <property type="match status" value="1"/>
</dbReference>
<dbReference type="FunFam" id="3.30.980.10:FF:000004">
    <property type="entry name" value="Alanine--tRNA ligase, cytoplasmic"/>
    <property type="match status" value="1"/>
</dbReference>
<dbReference type="Gene3D" id="2.40.30.130">
    <property type="match status" value="1"/>
</dbReference>
<dbReference type="Gene3D" id="3.10.310.40">
    <property type="match status" value="1"/>
</dbReference>
<dbReference type="Gene3D" id="3.30.54.20">
    <property type="match status" value="1"/>
</dbReference>
<dbReference type="Gene3D" id="6.10.250.550">
    <property type="match status" value="1"/>
</dbReference>
<dbReference type="Gene3D" id="3.30.930.10">
    <property type="entry name" value="Bira Bifunctional Protein, Domain 2"/>
    <property type="match status" value="1"/>
</dbReference>
<dbReference type="Gene3D" id="3.30.980.10">
    <property type="entry name" value="Threonyl-trna Synthetase, Chain A, domain 2"/>
    <property type="match status" value="1"/>
</dbReference>
<dbReference type="HAMAP" id="MF_00036_A">
    <property type="entry name" value="Ala_tRNA_synth_A"/>
    <property type="match status" value="1"/>
</dbReference>
<dbReference type="InterPro" id="IPR045864">
    <property type="entry name" value="aa-tRNA-synth_II/BPL/LPL"/>
</dbReference>
<dbReference type="InterPro" id="IPR002318">
    <property type="entry name" value="Ala-tRNA-lgiase_IIc"/>
</dbReference>
<dbReference type="InterPro" id="IPR018162">
    <property type="entry name" value="Ala-tRNA-ligase_IIc_anticod-bd"/>
</dbReference>
<dbReference type="InterPro" id="IPR018165">
    <property type="entry name" value="Ala-tRNA-synth_IIc_core"/>
</dbReference>
<dbReference type="InterPro" id="IPR018164">
    <property type="entry name" value="Ala-tRNA-synth_IIc_N"/>
</dbReference>
<dbReference type="InterPro" id="IPR022429">
    <property type="entry name" value="Ala-tRNA_lgiase_arc"/>
</dbReference>
<dbReference type="InterPro" id="IPR050058">
    <property type="entry name" value="Ala-tRNA_ligase"/>
</dbReference>
<dbReference type="InterPro" id="IPR003156">
    <property type="entry name" value="DHHA1_dom"/>
</dbReference>
<dbReference type="InterPro" id="IPR018163">
    <property type="entry name" value="Thr/Ala-tRNA-synth_IIc_edit"/>
</dbReference>
<dbReference type="InterPro" id="IPR009000">
    <property type="entry name" value="Transl_B-barrel_sf"/>
</dbReference>
<dbReference type="InterPro" id="IPR012947">
    <property type="entry name" value="tRNA_SAD"/>
</dbReference>
<dbReference type="NCBIfam" id="TIGR03683">
    <property type="entry name" value="A-tRNA_syn_arch"/>
    <property type="match status" value="1"/>
</dbReference>
<dbReference type="NCBIfam" id="TIGR00344">
    <property type="entry name" value="alaS"/>
    <property type="match status" value="1"/>
</dbReference>
<dbReference type="PANTHER" id="PTHR11777:SF9">
    <property type="entry name" value="ALANINE--TRNA LIGASE, CYTOPLASMIC"/>
    <property type="match status" value="1"/>
</dbReference>
<dbReference type="PANTHER" id="PTHR11777">
    <property type="entry name" value="ALANYL-TRNA SYNTHETASE"/>
    <property type="match status" value="1"/>
</dbReference>
<dbReference type="Pfam" id="PF02272">
    <property type="entry name" value="DHHA1"/>
    <property type="match status" value="1"/>
</dbReference>
<dbReference type="Pfam" id="PF01411">
    <property type="entry name" value="tRNA-synt_2c"/>
    <property type="match status" value="1"/>
</dbReference>
<dbReference type="Pfam" id="PF07973">
    <property type="entry name" value="tRNA_SAD"/>
    <property type="match status" value="1"/>
</dbReference>
<dbReference type="PRINTS" id="PR00980">
    <property type="entry name" value="TRNASYNTHALA"/>
</dbReference>
<dbReference type="SMART" id="SM00863">
    <property type="entry name" value="tRNA_SAD"/>
    <property type="match status" value="1"/>
</dbReference>
<dbReference type="SUPFAM" id="SSF55681">
    <property type="entry name" value="Class II aaRS and biotin synthetases"/>
    <property type="match status" value="1"/>
</dbReference>
<dbReference type="SUPFAM" id="SSF101353">
    <property type="entry name" value="Putative anticodon-binding domain of alanyl-tRNA synthetase (AlaRS)"/>
    <property type="match status" value="1"/>
</dbReference>
<dbReference type="SUPFAM" id="SSF55186">
    <property type="entry name" value="ThrRS/AlaRS common domain"/>
    <property type="match status" value="1"/>
</dbReference>
<dbReference type="SUPFAM" id="SSF50447">
    <property type="entry name" value="Translation proteins"/>
    <property type="match status" value="1"/>
</dbReference>
<dbReference type="PROSITE" id="PS50860">
    <property type="entry name" value="AA_TRNA_LIGASE_II_ALA"/>
    <property type="match status" value="1"/>
</dbReference>
<comment type="function">
    <text evidence="1">Catalyzes the attachment of alanine to tRNA(Ala) in a two-step reaction: alanine is first activated by ATP to form Ala-AMP and then transferred to the acceptor end of tRNA(Ala). Also edits incorrectly charged Ser-tRNA(Ala) and Gly-tRNA(Ala) via its editing domain.</text>
</comment>
<comment type="catalytic activity">
    <reaction evidence="1">
        <text>tRNA(Ala) + L-alanine + ATP = L-alanyl-tRNA(Ala) + AMP + diphosphate</text>
        <dbReference type="Rhea" id="RHEA:12540"/>
        <dbReference type="Rhea" id="RHEA-COMP:9657"/>
        <dbReference type="Rhea" id="RHEA-COMP:9923"/>
        <dbReference type="ChEBI" id="CHEBI:30616"/>
        <dbReference type="ChEBI" id="CHEBI:33019"/>
        <dbReference type="ChEBI" id="CHEBI:57972"/>
        <dbReference type="ChEBI" id="CHEBI:78442"/>
        <dbReference type="ChEBI" id="CHEBI:78497"/>
        <dbReference type="ChEBI" id="CHEBI:456215"/>
        <dbReference type="EC" id="6.1.1.7"/>
    </reaction>
</comment>
<comment type="cofactor">
    <cofactor evidence="1">
        <name>Zn(2+)</name>
        <dbReference type="ChEBI" id="CHEBI:29105"/>
    </cofactor>
    <text evidence="1">Binds 1 zinc ion per subunit.</text>
</comment>
<comment type="subcellular location">
    <subcellularLocation>
        <location evidence="1">Cytoplasm</location>
    </subcellularLocation>
</comment>
<comment type="domain">
    <text evidence="1">Consists of three domains; the N-terminal catalytic domain, the editing domain and the C-terminal C-Ala domain. The editing domain removes incorrectly charged amino acids, while the C-Ala domain, along with tRNA(Ala), serves as a bridge to cooperatively bring together the editing and aminoacylation centers thus stimulating deacylation of misacylated tRNAs.</text>
</comment>
<comment type="similarity">
    <text evidence="1">Belongs to the class-II aminoacyl-tRNA synthetase family.</text>
</comment>
<reference key="1">
    <citation type="journal article" date="2002" name="J. Mol. Microbiol. Biotechnol.">
        <title>The genome of Methanosarcina mazei: evidence for lateral gene transfer between Bacteria and Archaea.</title>
        <authorList>
            <person name="Deppenmeier U."/>
            <person name="Johann A."/>
            <person name="Hartsch T."/>
            <person name="Merkl R."/>
            <person name="Schmitz R.A."/>
            <person name="Martinez-Arias R."/>
            <person name="Henne A."/>
            <person name="Wiezer A."/>
            <person name="Baeumer S."/>
            <person name="Jacobi C."/>
            <person name="Brueggemann H."/>
            <person name="Lienard T."/>
            <person name="Christmann A."/>
            <person name="Boemecke M."/>
            <person name="Steckel S."/>
            <person name="Bhattacharyya A."/>
            <person name="Lykidis A."/>
            <person name="Overbeek R."/>
            <person name="Klenk H.-P."/>
            <person name="Gunsalus R.P."/>
            <person name="Fritz H.-J."/>
            <person name="Gottschalk G."/>
        </authorList>
    </citation>
    <scope>NUCLEOTIDE SEQUENCE [LARGE SCALE GENOMIC DNA]</scope>
    <source>
        <strain>ATCC BAA-159 / DSM 3647 / Goe1 / Go1 / JCM 11833 / OCM 88</strain>
    </source>
</reference>
<evidence type="ECO:0000255" key="1">
    <source>
        <dbReference type="HAMAP-Rule" id="MF_00036"/>
    </source>
</evidence>
<organism>
    <name type="scientific">Methanosarcina mazei (strain ATCC BAA-159 / DSM 3647 / Goe1 / Go1 / JCM 11833 / OCM 88)</name>
    <name type="common">Methanosarcina frisia</name>
    <dbReference type="NCBI Taxonomy" id="192952"/>
    <lineage>
        <taxon>Archaea</taxon>
        <taxon>Methanobacteriati</taxon>
        <taxon>Methanobacteriota</taxon>
        <taxon>Stenosarchaea group</taxon>
        <taxon>Methanomicrobia</taxon>
        <taxon>Methanosarcinales</taxon>
        <taxon>Methanosarcinaceae</taxon>
        <taxon>Methanosarcina</taxon>
    </lineage>
</organism>
<feature type="chain" id="PRO_0000075266" description="Alanine--tRNA ligase">
    <location>
        <begin position="1"/>
        <end position="926"/>
    </location>
</feature>
<feature type="binding site" evidence="1">
    <location>
        <position position="611"/>
    </location>
    <ligand>
        <name>Zn(2+)</name>
        <dbReference type="ChEBI" id="CHEBI:29105"/>
    </ligand>
</feature>
<feature type="binding site" evidence="1">
    <location>
        <position position="615"/>
    </location>
    <ligand>
        <name>Zn(2+)</name>
        <dbReference type="ChEBI" id="CHEBI:29105"/>
    </ligand>
</feature>
<feature type="binding site" evidence="1">
    <location>
        <position position="714"/>
    </location>
    <ligand>
        <name>Zn(2+)</name>
        <dbReference type="ChEBI" id="CHEBI:29105"/>
    </ligand>
</feature>
<feature type="binding site" evidence="1">
    <location>
        <position position="718"/>
    </location>
    <ligand>
        <name>Zn(2+)</name>
        <dbReference type="ChEBI" id="CHEBI:29105"/>
    </ligand>
</feature>
<protein>
    <recommendedName>
        <fullName evidence="1">Alanine--tRNA ligase</fullName>
        <ecNumber evidence="1">6.1.1.7</ecNumber>
    </recommendedName>
    <alternativeName>
        <fullName evidence="1">Alanyl-tRNA synthetase</fullName>
        <shortName evidence="1">AlaRS</shortName>
    </alternativeName>
</protein>
<gene>
    <name evidence="1" type="primary">alaS</name>
    <name type="ordered locus">MM_1486</name>
</gene>
<name>SYA_METMA</name>